<comment type="function">
    <text evidence="1">Together with AlgJ and AlgF, forms an inner membrane complex which probably interacts with the alginate polymerization-transport complex and adds acetyl groups at the O-2 and O-3 positions of mannuronate residues. Acetylation of alginate is important for the architecture of biofilms and increases the ability of alginate to act as a defense barrier (By similarity).</text>
</comment>
<comment type="pathway">
    <text>Glycan biosynthesis; alginate biosynthesis.</text>
</comment>
<comment type="subcellular location">
    <subcellularLocation>
        <location evidence="1">Cell inner membrane</location>
        <topology evidence="1">Multi-pass membrane protein</topology>
    </subcellularLocation>
</comment>
<comment type="similarity">
    <text evidence="3">Belongs to the membrane-bound acyltransferase family.</text>
</comment>
<accession>Q88ND2</accession>
<evidence type="ECO:0000250" key="1"/>
<evidence type="ECO:0000255" key="2"/>
<evidence type="ECO:0000305" key="3"/>
<name>ALGI_PSEPK</name>
<organism>
    <name type="scientific">Pseudomonas putida (strain ATCC 47054 / DSM 6125 / CFBP 8728 / NCIMB 11950 / KT2440)</name>
    <dbReference type="NCBI Taxonomy" id="160488"/>
    <lineage>
        <taxon>Bacteria</taxon>
        <taxon>Pseudomonadati</taxon>
        <taxon>Pseudomonadota</taxon>
        <taxon>Gammaproteobacteria</taxon>
        <taxon>Pseudomonadales</taxon>
        <taxon>Pseudomonadaceae</taxon>
        <taxon>Pseudomonas</taxon>
    </lineage>
</organism>
<reference key="1">
    <citation type="journal article" date="2002" name="Environ. Microbiol.">
        <title>Complete genome sequence and comparative analysis of the metabolically versatile Pseudomonas putida KT2440.</title>
        <authorList>
            <person name="Nelson K.E."/>
            <person name="Weinel C."/>
            <person name="Paulsen I.T."/>
            <person name="Dodson R.J."/>
            <person name="Hilbert H."/>
            <person name="Martins dos Santos V.A.P."/>
            <person name="Fouts D.E."/>
            <person name="Gill S.R."/>
            <person name="Pop M."/>
            <person name="Holmes M."/>
            <person name="Brinkac L.M."/>
            <person name="Beanan M.J."/>
            <person name="DeBoy R.T."/>
            <person name="Daugherty S.C."/>
            <person name="Kolonay J.F."/>
            <person name="Madupu R."/>
            <person name="Nelson W.C."/>
            <person name="White O."/>
            <person name="Peterson J.D."/>
            <person name="Khouri H.M."/>
            <person name="Hance I."/>
            <person name="Chris Lee P."/>
            <person name="Holtzapple E.K."/>
            <person name="Scanlan D."/>
            <person name="Tran K."/>
            <person name="Moazzez A."/>
            <person name="Utterback T.R."/>
            <person name="Rizzo M."/>
            <person name="Lee K."/>
            <person name="Kosack D."/>
            <person name="Moestl D."/>
            <person name="Wedler H."/>
            <person name="Lauber J."/>
            <person name="Stjepandic D."/>
            <person name="Hoheisel J."/>
            <person name="Straetz M."/>
            <person name="Heim S."/>
            <person name="Kiewitz C."/>
            <person name="Eisen J.A."/>
            <person name="Timmis K.N."/>
            <person name="Duesterhoeft A."/>
            <person name="Tuemmler B."/>
            <person name="Fraser C.M."/>
        </authorList>
    </citation>
    <scope>NUCLEOTIDE SEQUENCE [LARGE SCALE GENOMIC DNA]</scope>
    <source>
        <strain>ATCC 47054 / DSM 6125 / CFBP 8728 / NCIMB 11950 / KT2440</strain>
    </source>
</reference>
<dbReference type="EC" id="2.3.1.-"/>
<dbReference type="EMBL" id="AE015451">
    <property type="protein sequence ID" value="AAN66904.1"/>
    <property type="molecule type" value="Genomic_DNA"/>
</dbReference>
<dbReference type="RefSeq" id="NP_743440.1">
    <property type="nucleotide sequence ID" value="NC_002947.4"/>
</dbReference>
<dbReference type="RefSeq" id="WP_010952409.1">
    <property type="nucleotide sequence ID" value="NZ_CP169744.1"/>
</dbReference>
<dbReference type="SMR" id="Q88ND2"/>
<dbReference type="STRING" id="160488.PP_1280"/>
<dbReference type="PaxDb" id="160488-PP_1280"/>
<dbReference type="KEGG" id="ppu:PP_1280"/>
<dbReference type="PATRIC" id="fig|160488.4.peg.1357"/>
<dbReference type="eggNOG" id="COG1696">
    <property type="taxonomic scope" value="Bacteria"/>
</dbReference>
<dbReference type="HOGENOM" id="CLU_025255_1_3_6"/>
<dbReference type="OrthoDB" id="139172at2"/>
<dbReference type="PhylomeDB" id="Q88ND2"/>
<dbReference type="BioCyc" id="PPUT160488:G1G01-1367-MONOMER"/>
<dbReference type="UniPathway" id="UPA00286"/>
<dbReference type="Proteomes" id="UP000000556">
    <property type="component" value="Chromosome"/>
</dbReference>
<dbReference type="GO" id="GO:0005886">
    <property type="term" value="C:plasma membrane"/>
    <property type="evidence" value="ECO:0007669"/>
    <property type="project" value="UniProtKB-SubCell"/>
</dbReference>
<dbReference type="GO" id="GO:0016746">
    <property type="term" value="F:acyltransferase activity"/>
    <property type="evidence" value="ECO:0007669"/>
    <property type="project" value="UniProtKB-KW"/>
</dbReference>
<dbReference type="GO" id="GO:0042121">
    <property type="term" value="P:alginic acid biosynthetic process"/>
    <property type="evidence" value="ECO:0007669"/>
    <property type="project" value="UniProtKB-UniPathway"/>
</dbReference>
<dbReference type="InterPro" id="IPR024194">
    <property type="entry name" value="Ac/AlaTfrase_AlgI/DltB"/>
</dbReference>
<dbReference type="InterPro" id="IPR028362">
    <property type="entry name" value="AlgI"/>
</dbReference>
<dbReference type="InterPro" id="IPR051085">
    <property type="entry name" value="MB_O-acyltransferase"/>
</dbReference>
<dbReference type="InterPro" id="IPR004299">
    <property type="entry name" value="MBOAT_fam"/>
</dbReference>
<dbReference type="PANTHER" id="PTHR13285">
    <property type="entry name" value="ACYLTRANSFERASE"/>
    <property type="match status" value="1"/>
</dbReference>
<dbReference type="PANTHER" id="PTHR13285:SF23">
    <property type="entry name" value="TEICHOIC ACID D-ALANYLTRANSFERASE"/>
    <property type="match status" value="1"/>
</dbReference>
<dbReference type="Pfam" id="PF03062">
    <property type="entry name" value="MBOAT"/>
    <property type="match status" value="1"/>
</dbReference>
<dbReference type="PIRSF" id="PIRSF500217">
    <property type="entry name" value="AlgI"/>
    <property type="match status" value="1"/>
</dbReference>
<dbReference type="PIRSF" id="PIRSF016636">
    <property type="entry name" value="AlgI_DltB"/>
    <property type="match status" value="1"/>
</dbReference>
<keyword id="KW-0012">Acyltransferase</keyword>
<keyword id="KW-0016">Alginate biosynthesis</keyword>
<keyword id="KW-0997">Cell inner membrane</keyword>
<keyword id="KW-1003">Cell membrane</keyword>
<keyword id="KW-0472">Membrane</keyword>
<keyword id="KW-1185">Reference proteome</keyword>
<keyword id="KW-0808">Transferase</keyword>
<keyword id="KW-0812">Transmembrane</keyword>
<keyword id="KW-1133">Transmembrane helix</keyword>
<gene>
    <name type="primary">algI</name>
    <name type="ordered locus">PP_1280</name>
</gene>
<feature type="chain" id="PRO_0000213126" description="Probable alginate O-acetylase AlgI">
    <location>
        <begin position="1"/>
        <end position="485"/>
    </location>
</feature>
<feature type="transmembrane region" description="Helical" evidence="2">
    <location>
        <begin position="7"/>
        <end position="24"/>
    </location>
</feature>
<feature type="transmembrane region" description="Helical" evidence="2">
    <location>
        <begin position="39"/>
        <end position="61"/>
    </location>
</feature>
<feature type="transmembrane region" description="Helical" evidence="2">
    <location>
        <begin position="78"/>
        <end position="100"/>
    </location>
</feature>
<feature type="transmembrane region" description="Helical" evidence="2">
    <location>
        <begin position="115"/>
        <end position="137"/>
    </location>
</feature>
<feature type="transmembrane region" description="Helical" evidence="2">
    <location>
        <begin position="150"/>
        <end position="172"/>
    </location>
</feature>
<feature type="transmembrane region" description="Helical" evidence="2">
    <location>
        <begin position="312"/>
        <end position="334"/>
    </location>
</feature>
<feature type="transmembrane region" description="Helical" evidence="2">
    <location>
        <begin position="360"/>
        <end position="382"/>
    </location>
</feature>
<feature type="transmembrane region" description="Helical" evidence="2">
    <location>
        <begin position="402"/>
        <end position="424"/>
    </location>
</feature>
<feature type="transmembrane region" description="Helical" evidence="2">
    <location>
        <begin position="461"/>
        <end position="483"/>
    </location>
</feature>
<feature type="active site" evidence="2">
    <location>
        <position position="322"/>
    </location>
</feature>
<proteinExistence type="inferred from homology"/>
<protein>
    <recommendedName>
        <fullName>Probable alginate O-acetylase AlgI</fullName>
        <ecNumber>2.3.1.-</ecNumber>
    </recommendedName>
    <alternativeName>
        <fullName>Alginate biosynthesis protein AlgI</fullName>
    </alternativeName>
</protein>
<sequence>MVFSSNVFLFLFLPIFLGLYYLSGQRYRNLLLLVASYIFYAWWRVDFLALFAGVTLWNYWIGLKVGAAGVRTKPAQRWLLLGVGVDLAILGYFKYANFGVDSLNAIMTSFGLEPFILTHVLLPIGISFYIFESISYIIDVYRGDTPATRNLIDFAAFVAIFPHLIAGPVLRFKDLVDQFNNRTHTLDKFSEGCTRFMQGFIKKVFIADTLAVVADHCFALQNPTTGDAWLGALAYTAQLYFDFSGYSDMAIGLGLMMGFRFMENFKQPYISQSITEFWRRWHISLSTWLRDYLYITLGGNRKGTFNTYRNLFLTMLLGGLWHGANFTYIIWGAWHGMWLAIERALGLDTNPQRFNPVKWAFTFLLVVVGWVIFRAENLHVAARMYGAMFSFGDWQLSELNRAQLTGLQVATLVIAYLTLAFFGLRDFYRNARPTPKATPVQVNADGSIGLDWTRVMTRALILLLFVASILKLSAQSYSPFLYFQF</sequence>